<protein>
    <recommendedName>
        <fullName>Arf-GAP with coiled-coil, ANK repeat and PH domain-containing protein 1</fullName>
    </recommendedName>
    <alternativeName>
        <fullName>Centaurin-beta-1</fullName>
        <shortName>Cnt-b1</shortName>
    </alternativeName>
</protein>
<organism>
    <name type="scientific">Mus musculus</name>
    <name type="common">Mouse</name>
    <dbReference type="NCBI Taxonomy" id="10090"/>
    <lineage>
        <taxon>Eukaryota</taxon>
        <taxon>Metazoa</taxon>
        <taxon>Chordata</taxon>
        <taxon>Craniata</taxon>
        <taxon>Vertebrata</taxon>
        <taxon>Euteleostomi</taxon>
        <taxon>Mammalia</taxon>
        <taxon>Eutheria</taxon>
        <taxon>Euarchontoglires</taxon>
        <taxon>Glires</taxon>
        <taxon>Rodentia</taxon>
        <taxon>Myomorpha</taxon>
        <taxon>Muroidea</taxon>
        <taxon>Muridae</taxon>
        <taxon>Murinae</taxon>
        <taxon>Mus</taxon>
        <taxon>Mus</taxon>
    </lineage>
</organism>
<sequence length="740" mass="81704">MTVKLDFEECLKDSPRFRASIELVETEVSELETRLEKLLKLGSCLLESGQHYLAAGRAFVVGICDLARLGPPEPMMAECLEKFTVSLNHKLDSHAELLDATQHTLQQQIQTLVKEGLRGFREARRDFWRGAENLEAALTHNAEVPRRRVQEAEEAGTALRTARAGYRSRALDYALQVNVIEDKRKFDIMEFVLRLVEAQATYFQQGHEELNRLAQYRKELGTQLHNLVLNSARQKRDMEQRHVLLKQKELGGEEPEPSLKEGPSGLVMEGHLFKRASNAFKTWSRRWFTIQNNQLVYQKKYKDPVTVVVDDLRLCTVKLCPDSERRFCFEVVSTSKSCFLQADSERLLQLWVSAVQSSIASAFSQAHLENSPRGPGQVSGYHAPGSAATLACGGAARGRESGGVGQVAAQVQSVDGNAQCCDCREPAPEWASINLGVTLCIQCSGIHRSLGVHFSKVRSLTLDSWEPELVKLMCELGNVIINQIYEARVEAMAVKKPGPSCSRQEKEAWIHAKYVEKKFLTKLPEIRGRRGGRGPPRGHPPVPPKPPIRPHSGIVRSKSECPSDDMGSLHPGALLFQAAGHPPSLPTMADALAHGADVNWVNVGQGNATPLIRATAANSLLACEFLLQNGANVNQADSAGRGPLHHATILGHTGLACLFLKRGADLGARDTEGRDPLTIAMETTNADIVTLLRLAKMREAEAAQGQAGDETYLDIFRDFSLMASDDPEKLSRRSHDLHTL</sequence>
<comment type="function">
    <text evidence="1 7">GTPase-activating protein (GAP) for ADP ribosylation factor 6 (ARF6) required for clathrin-dependent export of proteins from recycling endosomes to trans-Golgi network and cell surface. Required for regulated export of ITGB1 from recycling endosomes to the cell surface and ITGB1-dependent cell migration (By similarity).</text>
</comment>
<comment type="activity regulation">
    <text evidence="2">GAP activity stimulated by phosphatidylinositol 4,5-bisphosphate (PIP2) and phosphatidic acid.</text>
</comment>
<comment type="subunit">
    <text evidence="2 7">Banana-shaped homodimer laterally assembling into tetramers, the tetramers further pack helically onto the membrane. Interacts with GTP-bound ARF6. Interacts with third cytoplasmic loop of SLC2A4/GLUT4. Interacts with CLTC. Interacts with GULP1. Forms a complex with GDP-bound ARF6 and GULP1. Interacts with ITGB1; required for ITGB1 recycling.</text>
</comment>
<comment type="subcellular location">
    <subcellularLocation>
        <location evidence="1">Recycling endosome membrane</location>
        <topology evidence="1">Peripheral membrane protein</topology>
        <orientation evidence="1">Cytoplasmic side</orientation>
    </subcellularLocation>
</comment>
<comment type="domain">
    <text evidence="2">PH domain binds phospholipids including phosphatidic acid, phosphatidylinositol 3-phosphate, phosphatidylinositol 3,5-bisphosphate (PIP2) and phosphatidylinositol 3,4,5-trisphosphate (PIP3). May mediate ACAP1-binding to PIP2 or PIP3 containing membranes. Only one PH domain of one ACAP1 dimer inserts into the membrane, while the other PH domain acts primaryly to interact with adjacent ACAP1 dimers (By similarity).</text>
</comment>
<comment type="domain">
    <text evidence="2">The BAR domain mediates homodimerization, it can neither bind membrane nor impart curvature, but instead requires the neighboring PH domain to achieve these functions (By similarity).</text>
</comment>
<comment type="miscellaneous">
    <text>Cells overexpressing Acap1 show accumulation of an electron dense coat containing Acap1 and Cltc on internal membranes as well as accumulation of Tfrc in pericentriolar recycling endosomes. Adipocytes with reduced level of Acap1 or Cltc fail to transport SLC2A4/GLUT4 from recycling endosomes to the cell surface upon insulin stimulation.</text>
</comment>
<dbReference type="EMBL" id="AK154449">
    <property type="protein sequence ID" value="BAE32594.1"/>
    <property type="molecule type" value="mRNA"/>
</dbReference>
<dbReference type="EMBL" id="AL596185">
    <property type="protein sequence ID" value="CAI35146.1"/>
    <property type="molecule type" value="Genomic_DNA"/>
</dbReference>
<dbReference type="EMBL" id="AL845465">
    <property type="protein sequence ID" value="CAI35146.1"/>
    <property type="status" value="JOINED"/>
    <property type="molecule type" value="Genomic_DNA"/>
</dbReference>
<dbReference type="EMBL" id="AL845465">
    <property type="protein sequence ID" value="CAM13886.1"/>
    <property type="molecule type" value="Genomic_DNA"/>
</dbReference>
<dbReference type="EMBL" id="AL596185">
    <property type="protein sequence ID" value="CAM13886.1"/>
    <property type="status" value="JOINED"/>
    <property type="molecule type" value="Genomic_DNA"/>
</dbReference>
<dbReference type="EMBL" id="BC031462">
    <property type="protein sequence ID" value="AAH31462.1"/>
    <property type="molecule type" value="mRNA"/>
</dbReference>
<dbReference type="EMBL" id="AK220213">
    <property type="protein sequence ID" value="BAD90138.1"/>
    <property type="molecule type" value="mRNA"/>
</dbReference>
<dbReference type="CCDS" id="CCDS24919.1"/>
<dbReference type="RefSeq" id="NP_722483.2">
    <property type="nucleotide sequence ID" value="NM_153788.3"/>
</dbReference>
<dbReference type="SMR" id="Q8K2H4"/>
<dbReference type="FunCoup" id="Q8K2H4">
    <property type="interactions" value="562"/>
</dbReference>
<dbReference type="IntAct" id="Q8K2H4">
    <property type="interactions" value="1"/>
</dbReference>
<dbReference type="STRING" id="10090.ENSMUSP00000001631"/>
<dbReference type="iPTMnet" id="Q8K2H4"/>
<dbReference type="PhosphoSitePlus" id="Q8K2H4"/>
<dbReference type="PaxDb" id="10090-ENSMUSP00000001631"/>
<dbReference type="ProteomicsDB" id="285833"/>
<dbReference type="Antibodypedia" id="24069">
    <property type="antibodies" value="235 antibodies from 33 providers"/>
</dbReference>
<dbReference type="DNASU" id="216859"/>
<dbReference type="Ensembl" id="ENSMUST00000001631.7">
    <property type="protein sequence ID" value="ENSMUSP00000001631.7"/>
    <property type="gene ID" value="ENSMUSG00000001588.13"/>
</dbReference>
<dbReference type="GeneID" id="216859"/>
<dbReference type="KEGG" id="mmu:216859"/>
<dbReference type="UCSC" id="uc007jsf.1">
    <property type="organism name" value="mouse"/>
</dbReference>
<dbReference type="AGR" id="MGI:2388270"/>
<dbReference type="CTD" id="9744"/>
<dbReference type="MGI" id="MGI:2388270">
    <property type="gene designation" value="Acap1"/>
</dbReference>
<dbReference type="VEuPathDB" id="HostDB:ENSMUSG00000001588"/>
<dbReference type="eggNOG" id="KOG0521">
    <property type="taxonomic scope" value="Eukaryota"/>
</dbReference>
<dbReference type="GeneTree" id="ENSGT00940000160289"/>
<dbReference type="InParanoid" id="Q8K2H4"/>
<dbReference type="OMA" id="QYCAHSK"/>
<dbReference type="OrthoDB" id="10070851at2759"/>
<dbReference type="PhylomeDB" id="Q8K2H4"/>
<dbReference type="TreeFam" id="TF318315"/>
<dbReference type="BioGRID-ORCS" id="216859">
    <property type="hits" value="3 hits in 77 CRISPR screens"/>
</dbReference>
<dbReference type="PRO" id="PR:Q8K2H4"/>
<dbReference type="Proteomes" id="UP000000589">
    <property type="component" value="Chromosome 11"/>
</dbReference>
<dbReference type="RNAct" id="Q8K2H4">
    <property type="molecule type" value="protein"/>
</dbReference>
<dbReference type="Bgee" id="ENSMUSG00000001588">
    <property type="expression patterns" value="Expressed in granulocyte and 75 other cell types or tissues"/>
</dbReference>
<dbReference type="GO" id="GO:0055038">
    <property type="term" value="C:recycling endosome membrane"/>
    <property type="evidence" value="ECO:0007669"/>
    <property type="project" value="UniProtKB-SubCell"/>
</dbReference>
<dbReference type="GO" id="GO:0005096">
    <property type="term" value="F:GTPase activator activity"/>
    <property type="evidence" value="ECO:0007669"/>
    <property type="project" value="InterPro"/>
</dbReference>
<dbReference type="GO" id="GO:0008270">
    <property type="term" value="F:zinc ion binding"/>
    <property type="evidence" value="ECO:0007669"/>
    <property type="project" value="UniProtKB-KW"/>
</dbReference>
<dbReference type="GO" id="GO:0016042">
    <property type="term" value="P:lipid catabolic process"/>
    <property type="evidence" value="ECO:0007669"/>
    <property type="project" value="UniProtKB-KW"/>
</dbReference>
<dbReference type="GO" id="GO:0007165">
    <property type="term" value="P:signal transduction"/>
    <property type="evidence" value="ECO:0007669"/>
    <property type="project" value="UniProtKB-KW"/>
</dbReference>
<dbReference type="CDD" id="cd08852">
    <property type="entry name" value="ArfGap_ACAP1"/>
    <property type="match status" value="1"/>
</dbReference>
<dbReference type="CDD" id="cd07639">
    <property type="entry name" value="BAR_ACAP1"/>
    <property type="match status" value="1"/>
</dbReference>
<dbReference type="CDD" id="cd13250">
    <property type="entry name" value="PH_ACAP"/>
    <property type="match status" value="1"/>
</dbReference>
<dbReference type="FunFam" id="1.20.1270.60:FF:000062">
    <property type="entry name" value="Arf-GAP with coiled-coil, ANK repeat and PH domain-containing protein 1"/>
    <property type="match status" value="1"/>
</dbReference>
<dbReference type="FunFam" id="1.10.220.150:FF:000007">
    <property type="entry name" value="Arf-GAP with coiled-coil, ANK repeat and PH domain-containing protein 2"/>
    <property type="match status" value="1"/>
</dbReference>
<dbReference type="FunFam" id="1.25.40.20:FF:000020">
    <property type="entry name" value="Arf-GAP with coiled-coil, ANK repeat and PH domain-containing protein 2"/>
    <property type="match status" value="1"/>
</dbReference>
<dbReference type="FunFam" id="2.30.29.30:FF:000026">
    <property type="entry name" value="Arf-GAP with coiled-coil, ANK repeat and PH domain-containing protein 2"/>
    <property type="match status" value="1"/>
</dbReference>
<dbReference type="Gene3D" id="1.25.40.20">
    <property type="entry name" value="Ankyrin repeat-containing domain"/>
    <property type="match status" value="1"/>
</dbReference>
<dbReference type="Gene3D" id="1.10.220.150">
    <property type="entry name" value="Arf GTPase activating protein"/>
    <property type="match status" value="1"/>
</dbReference>
<dbReference type="Gene3D" id="1.20.1270.60">
    <property type="entry name" value="Arfaptin homology (AH) domain/BAR domain"/>
    <property type="match status" value="1"/>
</dbReference>
<dbReference type="Gene3D" id="2.30.29.30">
    <property type="entry name" value="Pleckstrin-homology domain (PH domain)/Phosphotyrosine-binding domain (PTB)"/>
    <property type="match status" value="1"/>
</dbReference>
<dbReference type="InterPro" id="IPR045258">
    <property type="entry name" value="ACAP1/2/3-like"/>
</dbReference>
<dbReference type="InterPro" id="IPR027267">
    <property type="entry name" value="AH/BAR_dom_sf"/>
</dbReference>
<dbReference type="InterPro" id="IPR002110">
    <property type="entry name" value="Ankyrin_rpt"/>
</dbReference>
<dbReference type="InterPro" id="IPR036770">
    <property type="entry name" value="Ankyrin_rpt-contain_sf"/>
</dbReference>
<dbReference type="InterPro" id="IPR037278">
    <property type="entry name" value="ARFGAP/RecO"/>
</dbReference>
<dbReference type="InterPro" id="IPR001164">
    <property type="entry name" value="ArfGAP_dom"/>
</dbReference>
<dbReference type="InterPro" id="IPR038508">
    <property type="entry name" value="ArfGAP_dom_sf"/>
</dbReference>
<dbReference type="InterPro" id="IPR004148">
    <property type="entry name" value="BAR_dom"/>
</dbReference>
<dbReference type="InterPro" id="IPR011993">
    <property type="entry name" value="PH-like_dom_sf"/>
</dbReference>
<dbReference type="InterPro" id="IPR001849">
    <property type="entry name" value="PH_domain"/>
</dbReference>
<dbReference type="PANTHER" id="PTHR23180:SF197">
    <property type="entry name" value="ARF-GAP WITH COILED-COIL, ANK REPEAT AND PH DOMAIN-CONTAINING PROTEIN 1"/>
    <property type="match status" value="1"/>
</dbReference>
<dbReference type="PANTHER" id="PTHR23180">
    <property type="entry name" value="CENTAURIN/ARF"/>
    <property type="match status" value="1"/>
</dbReference>
<dbReference type="Pfam" id="PF12796">
    <property type="entry name" value="Ank_2"/>
    <property type="match status" value="1"/>
</dbReference>
<dbReference type="Pfam" id="PF01412">
    <property type="entry name" value="ArfGap"/>
    <property type="match status" value="1"/>
</dbReference>
<dbReference type="Pfam" id="PF16746">
    <property type="entry name" value="BAR_3"/>
    <property type="match status" value="1"/>
</dbReference>
<dbReference type="Pfam" id="PF00169">
    <property type="entry name" value="PH"/>
    <property type="match status" value="1"/>
</dbReference>
<dbReference type="PRINTS" id="PR00405">
    <property type="entry name" value="REVINTRACTNG"/>
</dbReference>
<dbReference type="SMART" id="SM00248">
    <property type="entry name" value="ANK"/>
    <property type="match status" value="3"/>
</dbReference>
<dbReference type="SMART" id="SM00105">
    <property type="entry name" value="ArfGap"/>
    <property type="match status" value="1"/>
</dbReference>
<dbReference type="SMART" id="SM00233">
    <property type="entry name" value="PH"/>
    <property type="match status" value="1"/>
</dbReference>
<dbReference type="SUPFAM" id="SSF48403">
    <property type="entry name" value="Ankyrin repeat"/>
    <property type="match status" value="1"/>
</dbReference>
<dbReference type="SUPFAM" id="SSF57863">
    <property type="entry name" value="ArfGap/RecO-like zinc finger"/>
    <property type="match status" value="1"/>
</dbReference>
<dbReference type="SUPFAM" id="SSF103657">
    <property type="entry name" value="BAR/IMD domain-like"/>
    <property type="match status" value="1"/>
</dbReference>
<dbReference type="SUPFAM" id="SSF50729">
    <property type="entry name" value="PH domain-like"/>
    <property type="match status" value="1"/>
</dbReference>
<dbReference type="PROSITE" id="PS50297">
    <property type="entry name" value="ANK_REP_REGION"/>
    <property type="match status" value="1"/>
</dbReference>
<dbReference type="PROSITE" id="PS50088">
    <property type="entry name" value="ANK_REPEAT"/>
    <property type="match status" value="2"/>
</dbReference>
<dbReference type="PROSITE" id="PS50115">
    <property type="entry name" value="ARFGAP"/>
    <property type="match status" value="1"/>
</dbReference>
<dbReference type="PROSITE" id="PS50003">
    <property type="entry name" value="PH_DOMAIN"/>
    <property type="match status" value="1"/>
</dbReference>
<accession>Q8K2H4</accession>
<accession>Q3U441</accession>
<accession>Q571H6</accession>
<keyword id="KW-0040">ANK repeat</keyword>
<keyword id="KW-0967">Endosome</keyword>
<keyword id="KW-0442">Lipid degradation</keyword>
<keyword id="KW-0443">Lipid metabolism</keyword>
<keyword id="KW-0472">Membrane</keyword>
<keyword id="KW-0479">Metal-binding</keyword>
<keyword id="KW-0944">Nitration</keyword>
<keyword id="KW-1185">Reference proteome</keyword>
<keyword id="KW-0677">Repeat</keyword>
<keyword id="KW-0807">Transducer</keyword>
<keyword id="KW-0862">Zinc</keyword>
<keyword id="KW-0863">Zinc-finger</keyword>
<reference evidence="11" key="1">
    <citation type="journal article" date="2005" name="Science">
        <title>The transcriptional landscape of the mammalian genome.</title>
        <authorList>
            <person name="Carninci P."/>
            <person name="Kasukawa T."/>
            <person name="Katayama S."/>
            <person name="Gough J."/>
            <person name="Frith M.C."/>
            <person name="Maeda N."/>
            <person name="Oyama R."/>
            <person name="Ravasi T."/>
            <person name="Lenhard B."/>
            <person name="Wells C."/>
            <person name="Kodzius R."/>
            <person name="Shimokawa K."/>
            <person name="Bajic V.B."/>
            <person name="Brenner S.E."/>
            <person name="Batalov S."/>
            <person name="Forrest A.R."/>
            <person name="Zavolan M."/>
            <person name="Davis M.J."/>
            <person name="Wilming L.G."/>
            <person name="Aidinis V."/>
            <person name="Allen J.E."/>
            <person name="Ambesi-Impiombato A."/>
            <person name="Apweiler R."/>
            <person name="Aturaliya R.N."/>
            <person name="Bailey T.L."/>
            <person name="Bansal M."/>
            <person name="Baxter L."/>
            <person name="Beisel K.W."/>
            <person name="Bersano T."/>
            <person name="Bono H."/>
            <person name="Chalk A.M."/>
            <person name="Chiu K.P."/>
            <person name="Choudhary V."/>
            <person name="Christoffels A."/>
            <person name="Clutterbuck D.R."/>
            <person name="Crowe M.L."/>
            <person name="Dalla E."/>
            <person name="Dalrymple B.P."/>
            <person name="de Bono B."/>
            <person name="Della Gatta G."/>
            <person name="di Bernardo D."/>
            <person name="Down T."/>
            <person name="Engstrom P."/>
            <person name="Fagiolini M."/>
            <person name="Faulkner G."/>
            <person name="Fletcher C.F."/>
            <person name="Fukushima T."/>
            <person name="Furuno M."/>
            <person name="Futaki S."/>
            <person name="Gariboldi M."/>
            <person name="Georgii-Hemming P."/>
            <person name="Gingeras T.R."/>
            <person name="Gojobori T."/>
            <person name="Green R.E."/>
            <person name="Gustincich S."/>
            <person name="Harbers M."/>
            <person name="Hayashi Y."/>
            <person name="Hensch T.K."/>
            <person name="Hirokawa N."/>
            <person name="Hill D."/>
            <person name="Huminiecki L."/>
            <person name="Iacono M."/>
            <person name="Ikeo K."/>
            <person name="Iwama A."/>
            <person name="Ishikawa T."/>
            <person name="Jakt M."/>
            <person name="Kanapin A."/>
            <person name="Katoh M."/>
            <person name="Kawasawa Y."/>
            <person name="Kelso J."/>
            <person name="Kitamura H."/>
            <person name="Kitano H."/>
            <person name="Kollias G."/>
            <person name="Krishnan S.P."/>
            <person name="Kruger A."/>
            <person name="Kummerfeld S.K."/>
            <person name="Kurochkin I.V."/>
            <person name="Lareau L.F."/>
            <person name="Lazarevic D."/>
            <person name="Lipovich L."/>
            <person name="Liu J."/>
            <person name="Liuni S."/>
            <person name="McWilliam S."/>
            <person name="Madan Babu M."/>
            <person name="Madera M."/>
            <person name="Marchionni L."/>
            <person name="Matsuda H."/>
            <person name="Matsuzawa S."/>
            <person name="Miki H."/>
            <person name="Mignone F."/>
            <person name="Miyake S."/>
            <person name="Morris K."/>
            <person name="Mottagui-Tabar S."/>
            <person name="Mulder N."/>
            <person name="Nakano N."/>
            <person name="Nakauchi H."/>
            <person name="Ng P."/>
            <person name="Nilsson R."/>
            <person name="Nishiguchi S."/>
            <person name="Nishikawa S."/>
            <person name="Nori F."/>
            <person name="Ohara O."/>
            <person name="Okazaki Y."/>
            <person name="Orlando V."/>
            <person name="Pang K.C."/>
            <person name="Pavan W.J."/>
            <person name="Pavesi G."/>
            <person name="Pesole G."/>
            <person name="Petrovsky N."/>
            <person name="Piazza S."/>
            <person name="Reed J."/>
            <person name="Reid J.F."/>
            <person name="Ring B.Z."/>
            <person name="Ringwald M."/>
            <person name="Rost B."/>
            <person name="Ruan Y."/>
            <person name="Salzberg S.L."/>
            <person name="Sandelin A."/>
            <person name="Schneider C."/>
            <person name="Schoenbach C."/>
            <person name="Sekiguchi K."/>
            <person name="Semple C.A."/>
            <person name="Seno S."/>
            <person name="Sessa L."/>
            <person name="Sheng Y."/>
            <person name="Shibata Y."/>
            <person name="Shimada H."/>
            <person name="Shimada K."/>
            <person name="Silva D."/>
            <person name="Sinclair B."/>
            <person name="Sperling S."/>
            <person name="Stupka E."/>
            <person name="Sugiura K."/>
            <person name="Sultana R."/>
            <person name="Takenaka Y."/>
            <person name="Taki K."/>
            <person name="Tammoja K."/>
            <person name="Tan S.L."/>
            <person name="Tang S."/>
            <person name="Taylor M.S."/>
            <person name="Tegner J."/>
            <person name="Teichmann S.A."/>
            <person name="Ueda H.R."/>
            <person name="van Nimwegen E."/>
            <person name="Verardo R."/>
            <person name="Wei C.L."/>
            <person name="Yagi K."/>
            <person name="Yamanishi H."/>
            <person name="Zabarovsky E."/>
            <person name="Zhu S."/>
            <person name="Zimmer A."/>
            <person name="Hide W."/>
            <person name="Bult C."/>
            <person name="Grimmond S.M."/>
            <person name="Teasdale R.D."/>
            <person name="Liu E.T."/>
            <person name="Brusic V."/>
            <person name="Quackenbush J."/>
            <person name="Wahlestedt C."/>
            <person name="Mattick J.S."/>
            <person name="Hume D.A."/>
            <person name="Kai C."/>
            <person name="Sasaki D."/>
            <person name="Tomaru Y."/>
            <person name="Fukuda S."/>
            <person name="Kanamori-Katayama M."/>
            <person name="Suzuki M."/>
            <person name="Aoki J."/>
            <person name="Arakawa T."/>
            <person name="Iida J."/>
            <person name="Imamura K."/>
            <person name="Itoh M."/>
            <person name="Kato T."/>
            <person name="Kawaji H."/>
            <person name="Kawagashira N."/>
            <person name="Kawashima T."/>
            <person name="Kojima M."/>
            <person name="Kondo S."/>
            <person name="Konno H."/>
            <person name="Nakano K."/>
            <person name="Ninomiya N."/>
            <person name="Nishio T."/>
            <person name="Okada M."/>
            <person name="Plessy C."/>
            <person name="Shibata K."/>
            <person name="Shiraki T."/>
            <person name="Suzuki S."/>
            <person name="Tagami M."/>
            <person name="Waki K."/>
            <person name="Watahiki A."/>
            <person name="Okamura-Oho Y."/>
            <person name="Suzuki H."/>
            <person name="Kawai J."/>
            <person name="Hayashizaki Y."/>
        </authorList>
    </citation>
    <scope>NUCLEOTIDE SEQUENCE [LARGE SCALE MRNA]</scope>
    <source>
        <strain evidence="11">NOD</strain>
        <tissue>Dendritic cell</tissue>
    </source>
</reference>
<reference key="2">
    <citation type="journal article" date="2009" name="PLoS Biol.">
        <title>Lineage-specific biology revealed by a finished genome assembly of the mouse.</title>
        <authorList>
            <person name="Church D.M."/>
            <person name="Goodstadt L."/>
            <person name="Hillier L.W."/>
            <person name="Zody M.C."/>
            <person name="Goldstein S."/>
            <person name="She X."/>
            <person name="Bult C.J."/>
            <person name="Agarwala R."/>
            <person name="Cherry J.L."/>
            <person name="DiCuccio M."/>
            <person name="Hlavina W."/>
            <person name="Kapustin Y."/>
            <person name="Meric P."/>
            <person name="Maglott D."/>
            <person name="Birtle Z."/>
            <person name="Marques A.C."/>
            <person name="Graves T."/>
            <person name="Zhou S."/>
            <person name="Teague B."/>
            <person name="Potamousis K."/>
            <person name="Churas C."/>
            <person name="Place M."/>
            <person name="Herschleb J."/>
            <person name="Runnheim R."/>
            <person name="Forrest D."/>
            <person name="Amos-Landgraf J."/>
            <person name="Schwartz D.C."/>
            <person name="Cheng Z."/>
            <person name="Lindblad-Toh K."/>
            <person name="Eichler E.E."/>
            <person name="Ponting C.P."/>
        </authorList>
    </citation>
    <scope>NUCLEOTIDE SEQUENCE [LARGE SCALE GENOMIC DNA]</scope>
    <source>
        <strain>C57BL/6J</strain>
    </source>
</reference>
<reference evidence="9" key="3">
    <citation type="journal article" date="2004" name="Genome Res.">
        <title>The status, quality, and expansion of the NIH full-length cDNA project: the Mammalian Gene Collection (MGC).</title>
        <authorList>
            <consortium name="The MGC Project Team"/>
        </authorList>
    </citation>
    <scope>NUCLEOTIDE SEQUENCE [LARGE SCALE MRNA]</scope>
    <source>
        <strain evidence="9">Czech II</strain>
        <tissue evidence="9">Mammary gland</tissue>
    </source>
</reference>
<reference evidence="8 12" key="4">
    <citation type="submission" date="2005-02" db="EMBL/GenBank/DDBJ databases">
        <title>Prediction of the coding sequences of mouse homologues of KIAA gene. The complete nucleotide sequences of mouse KIAA-homologous cDNAs identified by screening of terminal sequences of cDNA clones randomly sampled from size-fractionated libraries.</title>
        <authorList>
            <person name="Okazaki N."/>
            <person name="Kikuno R.F."/>
            <person name="Ohara R."/>
            <person name="Inamoto S."/>
            <person name="Kitamura H."/>
            <person name="Nagase T."/>
            <person name="Ohara O."/>
            <person name="Koga H."/>
        </authorList>
    </citation>
    <scope>NUCLEOTIDE SEQUENCE [LARGE SCALE MRNA] OF 583-740</scope>
    <source>
        <tissue evidence="10">Natural killer cell</tissue>
    </source>
</reference>
<reference evidence="8" key="5">
    <citation type="journal article" date="2007" name="J. Cell Biol.">
        <title>An ACAP1-containing clathrin coat complex for endocytic recycling.</title>
        <authorList>
            <person name="Li J."/>
            <person name="Peters P.J."/>
            <person name="Bai M."/>
            <person name="Dai J."/>
            <person name="Bos E."/>
            <person name="Kirchhausen T."/>
            <person name="Kandror K.V."/>
            <person name="Hsu V.W."/>
        </authorList>
    </citation>
    <scope>FUNCTION</scope>
    <scope>INTERACTION WITH CLTC AND SLC2A4</scope>
    <scope>MUTAGENESIS OF ARG-448</scope>
</reference>
<reference key="6">
    <citation type="journal article" date="2010" name="Cell">
        <title>A tissue-specific atlas of mouse protein phosphorylation and expression.</title>
        <authorList>
            <person name="Huttlin E.L."/>
            <person name="Jedrychowski M.P."/>
            <person name="Elias J.E."/>
            <person name="Goswami T."/>
            <person name="Rad R."/>
            <person name="Beausoleil S.A."/>
            <person name="Villen J."/>
            <person name="Haas W."/>
            <person name="Sowa M.E."/>
            <person name="Gygi S.P."/>
        </authorList>
    </citation>
    <scope>IDENTIFICATION BY MASS SPECTROMETRY [LARGE SCALE ANALYSIS]</scope>
    <source>
        <tissue>Spleen</tissue>
    </source>
</reference>
<evidence type="ECO:0000250" key="1"/>
<evidence type="ECO:0000250" key="2">
    <source>
        <dbReference type="UniProtKB" id="Q15027"/>
    </source>
</evidence>
<evidence type="ECO:0000255" key="3"/>
<evidence type="ECO:0000255" key="4">
    <source>
        <dbReference type="PROSITE-ProRule" id="PRU00145"/>
    </source>
</evidence>
<evidence type="ECO:0000255" key="5">
    <source>
        <dbReference type="PROSITE-ProRule" id="PRU00288"/>
    </source>
</evidence>
<evidence type="ECO:0000256" key="6">
    <source>
        <dbReference type="SAM" id="MobiDB-lite"/>
    </source>
</evidence>
<evidence type="ECO:0000269" key="7">
    <source>
    </source>
</evidence>
<evidence type="ECO:0000305" key="8"/>
<evidence type="ECO:0000312" key="9">
    <source>
        <dbReference type="EMBL" id="AAH31462.1"/>
    </source>
</evidence>
<evidence type="ECO:0000312" key="10">
    <source>
        <dbReference type="EMBL" id="BAD90138.1"/>
    </source>
</evidence>
<evidence type="ECO:0000312" key="11">
    <source>
        <dbReference type="EMBL" id="BAE32594.1"/>
    </source>
</evidence>
<evidence type="ECO:0000312" key="12">
    <source>
        <dbReference type="EMBL" id="CAI35146.1"/>
    </source>
</evidence>
<feature type="chain" id="PRO_0000306384" description="Arf-GAP with coiled-coil, ANK repeat and PH domain-containing protein 1">
    <location>
        <begin position="1"/>
        <end position="740"/>
    </location>
</feature>
<feature type="domain" description="BAR" evidence="3">
    <location>
        <begin position="1"/>
        <end position="226"/>
    </location>
</feature>
<feature type="domain" description="PH" evidence="4">
    <location>
        <begin position="265"/>
        <end position="360"/>
    </location>
</feature>
<feature type="domain" description="Arf-GAP" evidence="5">
    <location>
        <begin position="405"/>
        <end position="527"/>
    </location>
</feature>
<feature type="repeat" description="ANK 1" evidence="3">
    <location>
        <begin position="606"/>
        <end position="635"/>
    </location>
</feature>
<feature type="repeat" description="ANK 2" evidence="3">
    <location>
        <begin position="639"/>
        <end position="668"/>
    </location>
</feature>
<feature type="repeat" description="ANK 3" evidence="3">
    <location>
        <begin position="672"/>
        <end position="702"/>
    </location>
</feature>
<feature type="zinc finger region" description="C4-type" evidence="5">
    <location>
        <begin position="420"/>
        <end position="443"/>
    </location>
</feature>
<feature type="region of interest" description="Required for formation of endosomal tubules when overexpressed with PIP5K1C" evidence="2">
    <location>
        <begin position="1"/>
        <end position="382"/>
    </location>
</feature>
<feature type="region of interest" description="Required for interaction with GULP1" evidence="2">
    <location>
        <begin position="405"/>
        <end position="740"/>
    </location>
</feature>
<feature type="region of interest" description="Prevents interaction with ITGB1 when S-554 is not phosphorylated" evidence="1">
    <location>
        <begin position="525"/>
        <end position="566"/>
    </location>
</feature>
<feature type="region of interest" description="Disordered" evidence="6">
    <location>
        <begin position="525"/>
        <end position="562"/>
    </location>
</feature>
<feature type="compositionally biased region" description="Pro residues" evidence="6">
    <location>
        <begin position="537"/>
        <end position="549"/>
    </location>
</feature>
<feature type="modified residue" description="3'-nitrotyrosine" evidence="2">
    <location>
        <position position="485"/>
    </location>
</feature>
<feature type="mutagenesis site" description="Loss of catalytic activity. No loss of accumulation of coat proteins on internal membranes upon overexpression of Acap1." evidence="7">
    <original>R</original>
    <variation>Q</variation>
    <location>
        <position position="448"/>
    </location>
</feature>
<feature type="sequence conflict" description="In Ref. 1; BAE32594." evidence="8" ref="1">
    <original>K</original>
    <variation>R</variation>
    <location>
        <position position="522"/>
    </location>
</feature>
<feature type="sequence conflict" description="In Ref. 4; BAD90138." evidence="8" ref="4">
    <original>S</original>
    <variation>H</variation>
    <location>
        <position position="584"/>
    </location>
</feature>
<gene>
    <name type="primary">Acap1</name>
    <name type="synonym">Centb1</name>
    <name evidence="10" type="synonym">Kiaa0050</name>
</gene>
<name>ACAP1_MOUSE</name>
<proteinExistence type="evidence at protein level"/>